<protein>
    <recommendedName>
        <fullName>Uncharacterized protein YhcI</fullName>
    </recommendedName>
</protein>
<proteinExistence type="predicted"/>
<accession>P54593</accession>
<evidence type="ECO:0000255" key="1"/>
<evidence type="ECO:0000305" key="2"/>
<gene>
    <name type="primary">yhcI</name>
    <name type="ordered locus">BSU09090</name>
</gene>
<organism>
    <name type="scientific">Bacillus subtilis (strain 168)</name>
    <dbReference type="NCBI Taxonomy" id="224308"/>
    <lineage>
        <taxon>Bacteria</taxon>
        <taxon>Bacillati</taxon>
        <taxon>Bacillota</taxon>
        <taxon>Bacilli</taxon>
        <taxon>Bacillales</taxon>
        <taxon>Bacillaceae</taxon>
        <taxon>Bacillus</taxon>
    </lineage>
</organism>
<comment type="subcellular location">
    <subcellularLocation>
        <location evidence="2">Cell membrane</location>
        <topology evidence="2">Multi-pass membrane protein</topology>
    </subcellularLocation>
</comment>
<dbReference type="EMBL" id="X96983">
    <property type="protein sequence ID" value="CAA65692.1"/>
    <property type="molecule type" value="Genomic_DNA"/>
</dbReference>
<dbReference type="EMBL" id="AL009126">
    <property type="protein sequence ID" value="CAB12737.1"/>
    <property type="molecule type" value="Genomic_DNA"/>
</dbReference>
<dbReference type="EMBL" id="U58859">
    <property type="status" value="NOT_ANNOTATED_CDS"/>
    <property type="molecule type" value="Genomic_DNA"/>
</dbReference>
<dbReference type="PIR" id="E69822">
    <property type="entry name" value="E69822"/>
</dbReference>
<dbReference type="RefSeq" id="NP_388790.1">
    <property type="nucleotide sequence ID" value="NC_000964.3"/>
</dbReference>
<dbReference type="RefSeq" id="WP_003233421.1">
    <property type="nucleotide sequence ID" value="NZ_OZ025638.1"/>
</dbReference>
<dbReference type="FunCoup" id="P54593">
    <property type="interactions" value="253"/>
</dbReference>
<dbReference type="STRING" id="224308.BSU09090"/>
<dbReference type="PaxDb" id="224308-BSU09090"/>
<dbReference type="DNASU" id="939251"/>
<dbReference type="EnsemblBacteria" id="CAB12737">
    <property type="protein sequence ID" value="CAB12737"/>
    <property type="gene ID" value="BSU_09090"/>
</dbReference>
<dbReference type="GeneID" id="939251"/>
<dbReference type="KEGG" id="bsu:BSU09090"/>
<dbReference type="PATRIC" id="fig|224308.179.peg.982"/>
<dbReference type="eggNOG" id="COG1277">
    <property type="taxonomic scope" value="Bacteria"/>
</dbReference>
<dbReference type="InParanoid" id="P54593"/>
<dbReference type="OrthoDB" id="8613028at2"/>
<dbReference type="PhylomeDB" id="P54593"/>
<dbReference type="BioCyc" id="BSUB:BSU09090-MONOMER"/>
<dbReference type="Proteomes" id="UP000001570">
    <property type="component" value="Chromosome"/>
</dbReference>
<dbReference type="GO" id="GO:0005886">
    <property type="term" value="C:plasma membrane"/>
    <property type="evidence" value="ECO:0007669"/>
    <property type="project" value="UniProtKB-SubCell"/>
</dbReference>
<dbReference type="GO" id="GO:0140359">
    <property type="term" value="F:ABC-type transporter activity"/>
    <property type="evidence" value="ECO:0007669"/>
    <property type="project" value="InterPro"/>
</dbReference>
<dbReference type="InterPro" id="IPR032688">
    <property type="entry name" value="ABC2_NosY/YtrC-like"/>
</dbReference>
<dbReference type="PANTHER" id="PTHR37305">
    <property type="entry name" value="INTEGRAL MEMBRANE PROTEIN-RELATED"/>
    <property type="match status" value="1"/>
</dbReference>
<dbReference type="PANTHER" id="PTHR37305:SF1">
    <property type="entry name" value="MEMBRANE PROTEIN"/>
    <property type="match status" value="1"/>
</dbReference>
<dbReference type="Pfam" id="PF12679">
    <property type="entry name" value="ABC2_membrane_2"/>
    <property type="match status" value="1"/>
</dbReference>
<reference key="1">
    <citation type="journal article" date="1996" name="Microbiology">
        <title>A 22 kb DNA sequence in the cspB-glpPFKD region at 75 degrees on the Bacillus subtilis chromosome.</title>
        <authorList>
            <person name="Noback M.A."/>
            <person name="Terpstra P."/>
            <person name="Holsappel S."/>
            <person name="Venema G."/>
            <person name="Bron S."/>
        </authorList>
    </citation>
    <scope>NUCLEOTIDE SEQUENCE [GENOMIC DNA]</scope>
    <source>
        <strain>168</strain>
    </source>
</reference>
<reference key="2">
    <citation type="journal article" date="1997" name="Nature">
        <title>The complete genome sequence of the Gram-positive bacterium Bacillus subtilis.</title>
        <authorList>
            <person name="Kunst F."/>
            <person name="Ogasawara N."/>
            <person name="Moszer I."/>
            <person name="Albertini A.M."/>
            <person name="Alloni G."/>
            <person name="Azevedo V."/>
            <person name="Bertero M.G."/>
            <person name="Bessieres P."/>
            <person name="Bolotin A."/>
            <person name="Borchert S."/>
            <person name="Borriss R."/>
            <person name="Boursier L."/>
            <person name="Brans A."/>
            <person name="Braun M."/>
            <person name="Brignell S.C."/>
            <person name="Bron S."/>
            <person name="Brouillet S."/>
            <person name="Bruschi C.V."/>
            <person name="Caldwell B."/>
            <person name="Capuano V."/>
            <person name="Carter N.M."/>
            <person name="Choi S.-K."/>
            <person name="Codani J.-J."/>
            <person name="Connerton I.F."/>
            <person name="Cummings N.J."/>
            <person name="Daniel R.A."/>
            <person name="Denizot F."/>
            <person name="Devine K.M."/>
            <person name="Duesterhoeft A."/>
            <person name="Ehrlich S.D."/>
            <person name="Emmerson P.T."/>
            <person name="Entian K.-D."/>
            <person name="Errington J."/>
            <person name="Fabret C."/>
            <person name="Ferrari E."/>
            <person name="Foulger D."/>
            <person name="Fritz C."/>
            <person name="Fujita M."/>
            <person name="Fujita Y."/>
            <person name="Fuma S."/>
            <person name="Galizzi A."/>
            <person name="Galleron N."/>
            <person name="Ghim S.-Y."/>
            <person name="Glaser P."/>
            <person name="Goffeau A."/>
            <person name="Golightly E.J."/>
            <person name="Grandi G."/>
            <person name="Guiseppi G."/>
            <person name="Guy B.J."/>
            <person name="Haga K."/>
            <person name="Haiech J."/>
            <person name="Harwood C.R."/>
            <person name="Henaut A."/>
            <person name="Hilbert H."/>
            <person name="Holsappel S."/>
            <person name="Hosono S."/>
            <person name="Hullo M.-F."/>
            <person name="Itaya M."/>
            <person name="Jones L.-M."/>
            <person name="Joris B."/>
            <person name="Karamata D."/>
            <person name="Kasahara Y."/>
            <person name="Klaerr-Blanchard M."/>
            <person name="Klein C."/>
            <person name="Kobayashi Y."/>
            <person name="Koetter P."/>
            <person name="Koningstein G."/>
            <person name="Krogh S."/>
            <person name="Kumano M."/>
            <person name="Kurita K."/>
            <person name="Lapidus A."/>
            <person name="Lardinois S."/>
            <person name="Lauber J."/>
            <person name="Lazarevic V."/>
            <person name="Lee S.-M."/>
            <person name="Levine A."/>
            <person name="Liu H."/>
            <person name="Masuda S."/>
            <person name="Mauel C."/>
            <person name="Medigue C."/>
            <person name="Medina N."/>
            <person name="Mellado R.P."/>
            <person name="Mizuno M."/>
            <person name="Moestl D."/>
            <person name="Nakai S."/>
            <person name="Noback M."/>
            <person name="Noone D."/>
            <person name="O'Reilly M."/>
            <person name="Ogawa K."/>
            <person name="Ogiwara A."/>
            <person name="Oudega B."/>
            <person name="Park S.-H."/>
            <person name="Parro V."/>
            <person name="Pohl T.M."/>
            <person name="Portetelle D."/>
            <person name="Porwollik S."/>
            <person name="Prescott A.M."/>
            <person name="Presecan E."/>
            <person name="Pujic P."/>
            <person name="Purnelle B."/>
            <person name="Rapoport G."/>
            <person name="Rey M."/>
            <person name="Reynolds S."/>
            <person name="Rieger M."/>
            <person name="Rivolta C."/>
            <person name="Rocha E."/>
            <person name="Roche B."/>
            <person name="Rose M."/>
            <person name="Sadaie Y."/>
            <person name="Sato T."/>
            <person name="Scanlan E."/>
            <person name="Schleich S."/>
            <person name="Schroeter R."/>
            <person name="Scoffone F."/>
            <person name="Sekiguchi J."/>
            <person name="Sekowska A."/>
            <person name="Seror S.J."/>
            <person name="Serror P."/>
            <person name="Shin B.-S."/>
            <person name="Soldo B."/>
            <person name="Sorokin A."/>
            <person name="Tacconi E."/>
            <person name="Takagi T."/>
            <person name="Takahashi H."/>
            <person name="Takemaru K."/>
            <person name="Takeuchi M."/>
            <person name="Tamakoshi A."/>
            <person name="Tanaka T."/>
            <person name="Terpstra P."/>
            <person name="Tognoni A."/>
            <person name="Tosato V."/>
            <person name="Uchiyama S."/>
            <person name="Vandenbol M."/>
            <person name="Vannier F."/>
            <person name="Vassarotti A."/>
            <person name="Viari A."/>
            <person name="Wambutt R."/>
            <person name="Wedler E."/>
            <person name="Wedler H."/>
            <person name="Weitzenegger T."/>
            <person name="Winters P."/>
            <person name="Wipat A."/>
            <person name="Yamamoto H."/>
            <person name="Yamane K."/>
            <person name="Yasumoto K."/>
            <person name="Yata K."/>
            <person name="Yoshida K."/>
            <person name="Yoshikawa H.-F."/>
            <person name="Zumstein E."/>
            <person name="Yoshikawa H."/>
            <person name="Danchin A."/>
        </authorList>
    </citation>
    <scope>NUCLEOTIDE SEQUENCE [LARGE SCALE GENOMIC DNA]</scope>
    <source>
        <strain>168</strain>
    </source>
</reference>
<reference key="3">
    <citation type="submission" date="1996-05" db="EMBL/GenBank/DDBJ databases">
        <authorList>
            <person name="Wendrich T.M."/>
            <person name="Marahiel M.A."/>
        </authorList>
    </citation>
    <scope>NUCLEOTIDE SEQUENCE [GENOMIC DNA] OF 303-313</scope>
    <source>
        <strain>168 / JH642</strain>
    </source>
</reference>
<feature type="chain" id="PRO_0000049560" description="Uncharacterized protein YhcI">
    <location>
        <begin position="1"/>
        <end position="313"/>
    </location>
</feature>
<feature type="transmembrane region" description="Helical" evidence="1">
    <location>
        <begin position="16"/>
        <end position="36"/>
    </location>
</feature>
<feature type="transmembrane region" description="Helical" evidence="1">
    <location>
        <begin position="106"/>
        <end position="126"/>
    </location>
</feature>
<feature type="transmembrane region" description="Helical" evidence="1">
    <location>
        <begin position="155"/>
        <end position="175"/>
    </location>
</feature>
<feature type="transmembrane region" description="Helical" evidence="1">
    <location>
        <begin position="208"/>
        <end position="228"/>
    </location>
</feature>
<feature type="transmembrane region" description="Helical" evidence="1">
    <location>
        <begin position="233"/>
        <end position="253"/>
    </location>
</feature>
<feature type="transmembrane region" description="Helical" evidence="1">
    <location>
        <begin position="286"/>
        <end position="306"/>
    </location>
</feature>
<keyword id="KW-1003">Cell membrane</keyword>
<keyword id="KW-0472">Membrane</keyword>
<keyword id="KW-1185">Reference proteome</keyword>
<keyword id="KW-0812">Transmembrane</keyword>
<keyword id="KW-1133">Transmembrane helix</keyword>
<sequence length="313" mass="34881">MLNLIYNEWLKIFSRAGTWVMIGILGLTMVGFAFLANHFSAGESNSHWKQELQAQNAELKKEIKEDPSLKDGYKETITLNDYRIEHNIPSDTGYTVWSYVTDSANFTILTGLFTIIIAAGIVANEFNWGTIKLLMIRPLSRFQILMSKYITVLLFGLLLLLILFIGSTLLGLIFFGTGGETAANIHLIYKDGHVIEQNMMGHLATTYLSESVSALMVATMAFMLSAVFRNSSLAVGFSIFLLVAGTTATAFIAAKFDWAKYILFANVDLTQYVDGTPLIKGMTMTFSLVMLAIYFIIFLLLAFGIFMKRDIAN</sequence>
<name>YHCI_BACSU</name>